<proteinExistence type="evidence at protein level"/>
<name>ITR1_CUCMA</name>
<protein>
    <recommendedName>
        <fullName>Trypsin inhibitor 1</fullName>
    </recommendedName>
    <alternativeName>
        <fullName>CMTI-I</fullName>
    </alternativeName>
    <alternativeName>
        <fullName>ITD-I</fullName>
    </alternativeName>
    <alternativeName>
        <fullName>Trypsin inhibitor I</fullName>
    </alternativeName>
</protein>
<accession>P01074</accession>
<comment type="function">
    <text>Inhibits trypsin.</text>
</comment>
<comment type="subcellular location">
    <subcellularLocation>
        <location>Secreted</location>
    </subcellularLocation>
</comment>
<comment type="domain">
    <text>The presence of a 'disulfide through disulfide knot' structurally defines this protein as a knottin.</text>
</comment>
<comment type="similarity">
    <text evidence="2">Belongs to the protease inhibitor I7 (squash-type serine protease inhibitor) family.</text>
</comment>
<dbReference type="PIR" id="A01313">
    <property type="entry name" value="TIPU"/>
</dbReference>
<dbReference type="PDB" id="1CTI">
    <property type="method" value="NMR"/>
    <property type="chains" value="A=1-29"/>
</dbReference>
<dbReference type="PDB" id="1LU0">
    <property type="method" value="X-ray"/>
    <property type="resolution" value="1.03 A"/>
    <property type="chains" value="A/B=1-29"/>
</dbReference>
<dbReference type="PDB" id="1PPE">
    <property type="method" value="X-ray"/>
    <property type="resolution" value="2.00 A"/>
    <property type="chains" value="I=1-29"/>
</dbReference>
<dbReference type="PDB" id="2CTI">
    <property type="method" value="NMR"/>
    <property type="chains" value="A=1-29"/>
</dbReference>
<dbReference type="PDB" id="2STA">
    <property type="method" value="X-ray"/>
    <property type="resolution" value="1.80 A"/>
    <property type="chains" value="I=1-29"/>
</dbReference>
<dbReference type="PDB" id="2V1V">
    <property type="method" value="NMR"/>
    <property type="chains" value="A=1-29"/>
</dbReference>
<dbReference type="PDB" id="3CTI">
    <property type="method" value="NMR"/>
    <property type="chains" value="A=1-29"/>
</dbReference>
<dbReference type="PDBsum" id="1CTI"/>
<dbReference type="PDBsum" id="1LU0"/>
<dbReference type="PDBsum" id="1PPE"/>
<dbReference type="PDBsum" id="2CTI"/>
<dbReference type="PDBsum" id="2STA"/>
<dbReference type="PDBsum" id="2V1V"/>
<dbReference type="PDBsum" id="3CTI"/>
<dbReference type="SMR" id="P01074"/>
<dbReference type="MINT" id="P01074"/>
<dbReference type="MEROPS" id="I07.005"/>
<dbReference type="EvolutionaryTrace" id="P01074"/>
<dbReference type="Proteomes" id="UP000504608">
    <property type="component" value="Unplaced"/>
</dbReference>
<dbReference type="GO" id="GO:0005576">
    <property type="term" value="C:extracellular region"/>
    <property type="evidence" value="ECO:0007669"/>
    <property type="project" value="UniProtKB-SubCell"/>
</dbReference>
<dbReference type="GO" id="GO:0004867">
    <property type="term" value="F:serine-type endopeptidase inhibitor activity"/>
    <property type="evidence" value="ECO:0007669"/>
    <property type="project" value="UniProtKB-KW"/>
</dbReference>
<dbReference type="CDD" id="cd00150">
    <property type="entry name" value="PlantTI"/>
    <property type="match status" value="1"/>
</dbReference>
<dbReference type="Gene3D" id="4.10.75.20">
    <property type="match status" value="1"/>
</dbReference>
<dbReference type="InterPro" id="IPR000737">
    <property type="entry name" value="Prot_inh_squash"/>
</dbReference>
<dbReference type="InterPro" id="IPR011052">
    <property type="entry name" value="Proteinase_amylase_inhib_sf"/>
</dbReference>
<dbReference type="Pfam" id="PF00299">
    <property type="entry name" value="Squash"/>
    <property type="match status" value="1"/>
</dbReference>
<dbReference type="PRINTS" id="PR00293">
    <property type="entry name" value="SQUASHINHBTR"/>
</dbReference>
<dbReference type="SMART" id="SM00286">
    <property type="entry name" value="PTI"/>
    <property type="match status" value="1"/>
</dbReference>
<dbReference type="SUPFAM" id="SSF57027">
    <property type="entry name" value="Plant inhibitors of proteinases and amylases"/>
    <property type="match status" value="1"/>
</dbReference>
<dbReference type="PROSITE" id="PS00286">
    <property type="entry name" value="SQUASH_INHIBITOR"/>
    <property type="match status" value="1"/>
</dbReference>
<reference key="1">
    <citation type="journal article" date="1983" name="Hoppe-Seyler's Z. Physiol. Chem.">
        <title>Amino-acid sequence of two trypsin isoinhibitors, ITD I and ITD III from squash seeds (Cucurbita maxima).</title>
        <authorList>
            <person name="Wilusz T."/>
            <person name="Wieczorek M."/>
            <person name="Polanowski A."/>
            <person name="Denton A."/>
            <person name="Cook J."/>
            <person name="Laskowski M. Jr."/>
        </authorList>
    </citation>
    <scope>PROTEIN SEQUENCE</scope>
    <source>
        <tissue>Seed</tissue>
    </source>
</reference>
<reference key="2">
    <citation type="journal article" date="1989" name="FEBS Lett.">
        <title>The refined 2.0 A X-ray crystal structure of the complex formed between bovine beta-trypsin and CMTI-I, a trypsin inhibitor from squash seeds (Cucurbita maxima). Topological similarity of the squash seed inhibitors with the carboxypeptidase A inhibitor from potatoes.</title>
        <authorList>
            <person name="Bode W."/>
            <person name="Greyling H.J."/>
            <person name="Huber R."/>
            <person name="Otlewski J."/>
            <person name="Wilusz T."/>
        </authorList>
    </citation>
    <scope>X-RAY CRYSTALLOGRAPHY (2.0 ANGSTROMS)</scope>
</reference>
<reference key="3">
    <citation type="journal article" date="1989" name="J. Mol. Biol.">
        <title>Determination of the complete three-dimensional structure of the trypsin inhibitor from squash seeds in aqueous solution by nuclear magnetic resonance and a combination of distance geometry and dynamical simulated annealing.</title>
        <authorList>
            <person name="Holak T.A."/>
            <person name="Gondol D."/>
            <person name="Otlewski J."/>
            <person name="Wilusz T."/>
        </authorList>
    </citation>
    <scope>STRUCTURE BY NMR</scope>
</reference>
<reference key="4">
    <citation type="journal article" date="2000" name="Protein Sci.">
        <title>Conservative mutation Met8 --&gt; Leu affects the folding process and structural stability of squash trypsin inhibitor CMTI-I.</title>
        <authorList>
            <person name="Zhukov I."/>
            <person name="Jaroszewski L."/>
            <person name="Bierzynski A."/>
        </authorList>
    </citation>
    <scope>STRUCTURE BY NMR</scope>
</reference>
<keyword id="KW-0002">3D-structure</keyword>
<keyword id="KW-0903">Direct protein sequencing</keyword>
<keyword id="KW-1015">Disulfide bond</keyword>
<keyword id="KW-0960">Knottin</keyword>
<keyword id="KW-0646">Protease inhibitor</keyword>
<keyword id="KW-1185">Reference proteome</keyword>
<keyword id="KW-0964">Secreted</keyword>
<keyword id="KW-0722">Serine protease inhibitor</keyword>
<feature type="peptide" id="PRO_0000044376" description="Trypsin inhibitor 1">
    <location>
        <begin position="1"/>
        <end position="29"/>
    </location>
</feature>
<feature type="site" description="Reactive bond">
    <location>
        <begin position="5"/>
        <end position="6"/>
    </location>
</feature>
<feature type="disulfide bond" evidence="1">
    <location>
        <begin position="3"/>
        <end position="20"/>
    </location>
</feature>
<feature type="disulfide bond" evidence="1">
    <location>
        <begin position="10"/>
        <end position="22"/>
    </location>
</feature>
<feature type="disulfide bond" evidence="1">
    <location>
        <begin position="16"/>
        <end position="28"/>
    </location>
</feature>
<feature type="helix" evidence="3">
    <location>
        <begin position="13"/>
        <end position="15"/>
    </location>
</feature>
<feature type="strand" evidence="4">
    <location>
        <begin position="21"/>
        <end position="23"/>
    </location>
</feature>
<feature type="strand" evidence="3">
    <location>
        <begin position="26"/>
        <end position="28"/>
    </location>
</feature>
<sequence>RVCPRILMECKKDSDCLAECVCLEHGYCG</sequence>
<evidence type="ECO:0000269" key="1">
    <source>
    </source>
</evidence>
<evidence type="ECO:0000305" key="2"/>
<evidence type="ECO:0007829" key="3">
    <source>
        <dbReference type="PDB" id="1LU0"/>
    </source>
</evidence>
<evidence type="ECO:0007829" key="4">
    <source>
        <dbReference type="PDB" id="2STA"/>
    </source>
</evidence>
<organism>
    <name type="scientific">Cucurbita maxima</name>
    <name type="common">Pumpkin</name>
    <name type="synonym">Winter squash</name>
    <dbReference type="NCBI Taxonomy" id="3661"/>
    <lineage>
        <taxon>Eukaryota</taxon>
        <taxon>Viridiplantae</taxon>
        <taxon>Streptophyta</taxon>
        <taxon>Embryophyta</taxon>
        <taxon>Tracheophyta</taxon>
        <taxon>Spermatophyta</taxon>
        <taxon>Magnoliopsida</taxon>
        <taxon>eudicotyledons</taxon>
        <taxon>Gunneridae</taxon>
        <taxon>Pentapetalae</taxon>
        <taxon>rosids</taxon>
        <taxon>fabids</taxon>
        <taxon>Cucurbitales</taxon>
        <taxon>Cucurbitaceae</taxon>
        <taxon>Cucurbiteae</taxon>
        <taxon>Cucurbita</taxon>
    </lineage>
</organism>